<proteinExistence type="inferred from homology"/>
<feature type="chain" id="PRO_0000388580" description="Protein get1">
    <location>
        <begin position="1"/>
        <end position="199"/>
    </location>
</feature>
<feature type="topological domain" description="Lumenal" evidence="1">
    <location>
        <begin position="1"/>
        <end position="4"/>
    </location>
</feature>
<feature type="transmembrane region" description="Helical" evidence="1">
    <location>
        <begin position="5"/>
        <end position="24"/>
    </location>
</feature>
<feature type="topological domain" description="Cytoplasmic" evidence="1">
    <location>
        <begin position="25"/>
        <end position="110"/>
    </location>
</feature>
<feature type="transmembrane region" description="Helical" evidence="1">
    <location>
        <begin position="111"/>
        <end position="131"/>
    </location>
</feature>
<feature type="topological domain" description="Lumenal" evidence="1">
    <location>
        <begin position="132"/>
        <end position="155"/>
    </location>
</feature>
<feature type="transmembrane region" description="Helical" evidence="1">
    <location>
        <begin position="156"/>
        <end position="172"/>
    </location>
</feature>
<feature type="topological domain" description="Cytoplasmic" evidence="1">
    <location>
        <begin position="173"/>
        <end position="199"/>
    </location>
</feature>
<feature type="coiled-coil region" evidence="1">
    <location>
        <begin position="42"/>
        <end position="99"/>
    </location>
</feature>
<name>GET1_ASPTN</name>
<gene>
    <name type="primary">get1</name>
    <name type="ORF">ATEG_05589</name>
</gene>
<protein>
    <recommendedName>
        <fullName evidence="1">Protein get1</fullName>
    </recommendedName>
    <alternativeName>
        <fullName evidence="1">Guided entry of tail-anchored proteins 1</fullName>
    </alternativeName>
</protein>
<reference key="1">
    <citation type="submission" date="2005-09" db="EMBL/GenBank/DDBJ databases">
        <title>Annotation of the Aspergillus terreus NIH2624 genome.</title>
        <authorList>
            <person name="Birren B.W."/>
            <person name="Lander E.S."/>
            <person name="Galagan J.E."/>
            <person name="Nusbaum C."/>
            <person name="Devon K."/>
            <person name="Henn M."/>
            <person name="Ma L.-J."/>
            <person name="Jaffe D.B."/>
            <person name="Butler J."/>
            <person name="Alvarez P."/>
            <person name="Gnerre S."/>
            <person name="Grabherr M."/>
            <person name="Kleber M."/>
            <person name="Mauceli E.W."/>
            <person name="Brockman W."/>
            <person name="Rounsley S."/>
            <person name="Young S.K."/>
            <person name="LaButti K."/>
            <person name="Pushparaj V."/>
            <person name="DeCaprio D."/>
            <person name="Crawford M."/>
            <person name="Koehrsen M."/>
            <person name="Engels R."/>
            <person name="Montgomery P."/>
            <person name="Pearson M."/>
            <person name="Howarth C."/>
            <person name="Larson L."/>
            <person name="Luoma S."/>
            <person name="White J."/>
            <person name="Alvarado L."/>
            <person name="Kodira C.D."/>
            <person name="Zeng Q."/>
            <person name="Oleary S."/>
            <person name="Yandava C."/>
            <person name="Denning D.W."/>
            <person name="Nierman W.C."/>
            <person name="Milne T."/>
            <person name="Madden K."/>
        </authorList>
    </citation>
    <scope>NUCLEOTIDE SEQUENCE [LARGE SCALE GENOMIC DNA]</scope>
    <source>
        <strain>NIH 2624 / FGSC A1156</strain>
    </source>
</reference>
<keyword id="KW-0175">Coiled coil</keyword>
<keyword id="KW-0256">Endoplasmic reticulum</keyword>
<keyword id="KW-0472">Membrane</keyword>
<keyword id="KW-1185">Reference proteome</keyword>
<keyword id="KW-0812">Transmembrane</keyword>
<keyword id="KW-1133">Transmembrane helix</keyword>
<keyword id="KW-0813">Transport</keyword>
<evidence type="ECO:0000255" key="1">
    <source>
        <dbReference type="HAMAP-Rule" id="MF_03113"/>
    </source>
</evidence>
<evidence type="ECO:0000305" key="2"/>
<organism>
    <name type="scientific">Aspergillus terreus (strain NIH 2624 / FGSC A1156)</name>
    <dbReference type="NCBI Taxonomy" id="341663"/>
    <lineage>
        <taxon>Eukaryota</taxon>
        <taxon>Fungi</taxon>
        <taxon>Dikarya</taxon>
        <taxon>Ascomycota</taxon>
        <taxon>Pezizomycotina</taxon>
        <taxon>Eurotiomycetes</taxon>
        <taxon>Eurotiomycetidae</taxon>
        <taxon>Eurotiales</taxon>
        <taxon>Aspergillaceae</taxon>
        <taxon>Aspergillus</taxon>
        <taxon>Aspergillus subgen. Circumdati</taxon>
    </lineage>
</organism>
<sequence>MLSLIWTVFFVHVAIYLINTIGASTIDGLLWLLYLKLPTSTSKCAQEQTRLKREVVQLKREMNNTSSQDEFAKWAKIRRRHDKTMEEYEKINKTLNAQKTSFDWSVKIARWLSTNGLKIFLQFWYSKTPVFALPQAWFPYYVEWVLSFPRAPMGSVSIQVWSNVCATAISVLAEIVTAAFMQMASRTAVPVAAEDKKEL</sequence>
<comment type="function">
    <text evidence="1">Required for the post-translational delivery of tail-anchored (TA) proteins to the endoplasmic reticulum. Acts as a membrane receptor for soluble get3, which recognizes and selectively binds the transmembrane domain of TA proteins in the cytosol.</text>
</comment>
<comment type="subunit">
    <text evidence="1">Interacts with get3.</text>
</comment>
<comment type="subcellular location">
    <subcellularLocation>
        <location evidence="1">Endoplasmic reticulum membrane</location>
        <topology evidence="1">Multi-pass membrane protein</topology>
    </subcellularLocation>
</comment>
<comment type="similarity">
    <text evidence="1">Belongs to the WRB/GET1 family.</text>
</comment>
<comment type="sequence caution" evidence="2">
    <conflict type="erroneous gene model prediction">
        <sequence resource="EMBL-CDS" id="EAU34658"/>
    </conflict>
</comment>
<dbReference type="EMBL" id="CH476600">
    <property type="protein sequence ID" value="EAU34658.1"/>
    <property type="status" value="ALT_SEQ"/>
    <property type="molecule type" value="Genomic_DNA"/>
</dbReference>
<dbReference type="RefSeq" id="XP_001214767.1">
    <property type="nucleotide sequence ID" value="XM_001214767.1"/>
</dbReference>
<dbReference type="SMR" id="Q0CL45"/>
<dbReference type="STRING" id="341663.Q0CL45"/>
<dbReference type="GeneID" id="4320793"/>
<dbReference type="eggNOG" id="KOG4253">
    <property type="taxonomic scope" value="Eukaryota"/>
</dbReference>
<dbReference type="OrthoDB" id="69461at2759"/>
<dbReference type="Proteomes" id="UP000007963">
    <property type="component" value="Unassembled WGS sequence"/>
</dbReference>
<dbReference type="GO" id="GO:0005789">
    <property type="term" value="C:endoplasmic reticulum membrane"/>
    <property type="evidence" value="ECO:0007669"/>
    <property type="project" value="UniProtKB-SubCell"/>
</dbReference>
<dbReference type="GO" id="GO:0043529">
    <property type="term" value="C:GET complex"/>
    <property type="evidence" value="ECO:0007669"/>
    <property type="project" value="InterPro"/>
</dbReference>
<dbReference type="GO" id="GO:0043495">
    <property type="term" value="F:protein-membrane adaptor activity"/>
    <property type="evidence" value="ECO:0007669"/>
    <property type="project" value="TreeGrafter"/>
</dbReference>
<dbReference type="GO" id="GO:0071816">
    <property type="term" value="P:tail-anchored membrane protein insertion into ER membrane"/>
    <property type="evidence" value="ECO:0007669"/>
    <property type="project" value="InterPro"/>
</dbReference>
<dbReference type="FunFam" id="1.10.287.660:FF:000006">
    <property type="entry name" value="Protein GET1"/>
    <property type="match status" value="1"/>
</dbReference>
<dbReference type="Gene3D" id="1.10.287.660">
    <property type="entry name" value="Helix hairpin bin"/>
    <property type="match status" value="1"/>
</dbReference>
<dbReference type="HAMAP" id="MF_03113">
    <property type="entry name" value="Get1"/>
    <property type="match status" value="1"/>
</dbReference>
<dbReference type="InterPro" id="IPR028945">
    <property type="entry name" value="Get1"/>
</dbReference>
<dbReference type="InterPro" id="IPR027538">
    <property type="entry name" value="Get1_fungi"/>
</dbReference>
<dbReference type="InterPro" id="IPR029012">
    <property type="entry name" value="Helix_hairpin_bin_sf"/>
</dbReference>
<dbReference type="PANTHER" id="PTHR42650:SF1">
    <property type="entry name" value="GUIDED ENTRY OF TAIL-ANCHORED PROTEINS FACTOR 1"/>
    <property type="match status" value="1"/>
</dbReference>
<dbReference type="PANTHER" id="PTHR42650">
    <property type="entry name" value="TAIL-ANCHORED PROTEIN INSERTION RECEPTOR WRB"/>
    <property type="match status" value="1"/>
</dbReference>
<dbReference type="Pfam" id="PF04420">
    <property type="entry name" value="CHD5"/>
    <property type="match status" value="1"/>
</dbReference>
<accession>Q0CL45</accession>